<dbReference type="EMBL" id="S39508">
    <property type="protein sequence ID" value="AAB19249.2"/>
    <property type="molecule type" value="Genomic_DNA"/>
</dbReference>
<dbReference type="EMBL" id="BC099520">
    <property type="protein sequence ID" value="AAH99520.1"/>
    <property type="molecule type" value="mRNA"/>
</dbReference>
<dbReference type="CCDS" id="CCDS17236.1"/>
<dbReference type="PIR" id="JH0407">
    <property type="entry name" value="JH0407"/>
</dbReference>
<dbReference type="RefSeq" id="NP_001025476.1">
    <property type="nucleotide sequence ID" value="NM_001030305.2"/>
</dbReference>
<dbReference type="SMR" id="P24526"/>
<dbReference type="FunCoup" id="P24526">
    <property type="interactions" value="1165"/>
</dbReference>
<dbReference type="IntAct" id="P24526">
    <property type="interactions" value="1"/>
</dbReference>
<dbReference type="STRING" id="10090.ENSMUSP00000029034"/>
<dbReference type="iPTMnet" id="P24526"/>
<dbReference type="PhosphoSitePlus" id="P24526"/>
<dbReference type="jPOST" id="P24526"/>
<dbReference type="PaxDb" id="10090-ENSMUSP00000029034"/>
<dbReference type="PeptideAtlas" id="P24526"/>
<dbReference type="ProteomicsDB" id="252632"/>
<dbReference type="Antibodypedia" id="25321">
    <property type="antibodies" value="168 antibodies from 22 providers"/>
</dbReference>
<dbReference type="Ensembl" id="ENSMUST00000029034.9">
    <property type="protein sequence ID" value="ENSMUSP00000029034.7"/>
    <property type="gene ID" value="ENSMUSG00000052468.8"/>
</dbReference>
<dbReference type="GeneID" id="18857"/>
<dbReference type="KEGG" id="mmu:18857"/>
<dbReference type="UCSC" id="uc008oph.1">
    <property type="organism name" value="mouse"/>
</dbReference>
<dbReference type="AGR" id="MGI:102667"/>
<dbReference type="CTD" id="5375"/>
<dbReference type="MGI" id="MGI:102667">
    <property type="gene designation" value="Pmp2"/>
</dbReference>
<dbReference type="VEuPathDB" id="HostDB:ENSMUSG00000052468"/>
<dbReference type="eggNOG" id="KOG4015">
    <property type="taxonomic scope" value="Eukaryota"/>
</dbReference>
<dbReference type="GeneTree" id="ENSGT00940000160445"/>
<dbReference type="HOGENOM" id="CLU_113772_0_0_1"/>
<dbReference type="InParanoid" id="P24526"/>
<dbReference type="OMA" id="LTAKCIM"/>
<dbReference type="OrthoDB" id="412780at2759"/>
<dbReference type="PhylomeDB" id="P24526"/>
<dbReference type="TreeFam" id="TF316894"/>
<dbReference type="BioGRID-ORCS" id="18857">
    <property type="hits" value="5 hits in 80 CRISPR screens"/>
</dbReference>
<dbReference type="PRO" id="PR:P24526"/>
<dbReference type="Proteomes" id="UP000000589">
    <property type="component" value="Chromosome 3"/>
</dbReference>
<dbReference type="RNAct" id="P24526">
    <property type="molecule type" value="protein"/>
</dbReference>
<dbReference type="Bgee" id="ENSMUSG00000052468">
    <property type="expression patterns" value="Expressed in embryonic cell in blastocyst and 14 other cell types or tissues"/>
</dbReference>
<dbReference type="GO" id="GO:0005737">
    <property type="term" value="C:cytoplasm"/>
    <property type="evidence" value="ECO:0007669"/>
    <property type="project" value="UniProtKB-SubCell"/>
</dbReference>
<dbReference type="GO" id="GO:0043209">
    <property type="term" value="C:myelin sheath"/>
    <property type="evidence" value="ECO:0007669"/>
    <property type="project" value="InterPro"/>
</dbReference>
<dbReference type="GO" id="GO:0015485">
    <property type="term" value="F:cholesterol binding"/>
    <property type="evidence" value="ECO:0000250"/>
    <property type="project" value="UniProtKB"/>
</dbReference>
<dbReference type="GO" id="GO:0005504">
    <property type="term" value="F:fatty acid binding"/>
    <property type="evidence" value="ECO:0000250"/>
    <property type="project" value="UniProtKB"/>
</dbReference>
<dbReference type="GO" id="GO:0061024">
    <property type="term" value="P:membrane organization"/>
    <property type="evidence" value="ECO:0000314"/>
    <property type="project" value="MGI"/>
</dbReference>
<dbReference type="CDD" id="cd19469">
    <property type="entry name" value="FABP8"/>
    <property type="match status" value="1"/>
</dbReference>
<dbReference type="FunFam" id="2.40.128.20:FF:000001">
    <property type="entry name" value="Fatty acid-binding protein, adipocyte"/>
    <property type="match status" value="1"/>
</dbReference>
<dbReference type="Gene3D" id="2.40.128.20">
    <property type="match status" value="1"/>
</dbReference>
<dbReference type="InterPro" id="IPR012674">
    <property type="entry name" value="Calycin"/>
</dbReference>
<dbReference type="InterPro" id="IPR000463">
    <property type="entry name" value="Fatty_acid-bd"/>
</dbReference>
<dbReference type="InterPro" id="IPR031259">
    <property type="entry name" value="ILBP"/>
</dbReference>
<dbReference type="InterPro" id="IPR000566">
    <property type="entry name" value="Lipocln_cytosolic_FA-bd_dom"/>
</dbReference>
<dbReference type="InterPro" id="IPR031256">
    <property type="entry name" value="Myelin_P2"/>
</dbReference>
<dbReference type="PANTHER" id="PTHR11955">
    <property type="entry name" value="FATTY ACID BINDING PROTEIN"/>
    <property type="match status" value="1"/>
</dbReference>
<dbReference type="Pfam" id="PF00061">
    <property type="entry name" value="Lipocalin"/>
    <property type="match status" value="1"/>
</dbReference>
<dbReference type="PRINTS" id="PR00178">
    <property type="entry name" value="FATTYACIDBP"/>
</dbReference>
<dbReference type="SUPFAM" id="SSF50814">
    <property type="entry name" value="Lipocalins"/>
    <property type="match status" value="1"/>
</dbReference>
<dbReference type="PROSITE" id="PS00214">
    <property type="entry name" value="FABP"/>
    <property type="match status" value="1"/>
</dbReference>
<name>MYP2_MOUSE</name>
<accession>P24526</accession>
<accession>Q4KL10</accession>
<keyword id="KW-0007">Acetylation</keyword>
<keyword id="KW-0963">Cytoplasm</keyword>
<keyword id="KW-0446">Lipid-binding</keyword>
<keyword id="KW-1185">Reference proteome</keyword>
<keyword id="KW-0813">Transport</keyword>
<reference key="1">
    <citation type="journal article" date="1991" name="J. Neurochem.">
        <title>Structure of the mouse myelin P2 protein gene.</title>
        <authorList>
            <person name="Narayanan V."/>
            <person name="Kaestner K.H."/>
            <person name="Tennekoon G.I."/>
        </authorList>
    </citation>
    <scope>NUCLEOTIDE SEQUENCE [GENOMIC DNA]</scope>
</reference>
<reference key="2">
    <citation type="journal article" date="2004" name="Genome Res.">
        <title>The status, quality, and expansion of the NIH full-length cDNA project: the Mammalian Gene Collection (MGC).</title>
        <authorList>
            <consortium name="The MGC Project Team"/>
        </authorList>
    </citation>
    <scope>NUCLEOTIDE SEQUENCE [LARGE SCALE MRNA]</scope>
    <source>
        <tissue>Thyroid</tissue>
    </source>
</reference>
<comment type="function">
    <text evidence="1">May play a role in lipid transport protein in Schwann cells. May bind cholesterol (By similarity).</text>
</comment>
<comment type="subunit">
    <text evidence="1">Monomer.</text>
</comment>
<comment type="subcellular location">
    <subcellularLocation>
        <location evidence="1">Cytoplasm</location>
    </subcellularLocation>
</comment>
<comment type="domain">
    <text evidence="1">Forms a beta-barrel structure that accommodates hydrophobic ligands in its interior.</text>
</comment>
<comment type="miscellaneous">
    <text evidence="1">P2 protein and myelin basic protein together constitute a major fraction of peripheral nervous system myelin protein.</text>
</comment>
<comment type="similarity">
    <text evidence="4">Belongs to the calycin superfamily. Fatty-acid binding protein (FABP) family.</text>
</comment>
<proteinExistence type="evidence at transcript level"/>
<organism>
    <name type="scientific">Mus musculus</name>
    <name type="common">Mouse</name>
    <dbReference type="NCBI Taxonomy" id="10090"/>
    <lineage>
        <taxon>Eukaryota</taxon>
        <taxon>Metazoa</taxon>
        <taxon>Chordata</taxon>
        <taxon>Craniata</taxon>
        <taxon>Vertebrata</taxon>
        <taxon>Euteleostomi</taxon>
        <taxon>Mammalia</taxon>
        <taxon>Eutheria</taxon>
        <taxon>Euarchontoglires</taxon>
        <taxon>Glires</taxon>
        <taxon>Rodentia</taxon>
        <taxon>Myomorpha</taxon>
        <taxon>Muroidea</taxon>
        <taxon>Muridae</taxon>
        <taxon>Murinae</taxon>
        <taxon>Mus</taxon>
        <taxon>Mus</taxon>
    </lineage>
</organism>
<feature type="initiator methionine" description="Removed" evidence="3">
    <location>
        <position position="1"/>
    </location>
</feature>
<feature type="chain" id="PRO_0000067389" description="Myelin P2 protein">
    <location>
        <begin position="2"/>
        <end position="132"/>
    </location>
</feature>
<feature type="binding site" evidence="3">
    <location>
        <position position="107"/>
    </location>
    <ligand>
        <name>(9Z)-octadecenoate</name>
        <dbReference type="ChEBI" id="CHEBI:30823"/>
    </ligand>
</feature>
<feature type="binding site" evidence="2">
    <location>
        <position position="107"/>
    </location>
    <ligand>
        <name>hexadecanoate</name>
        <dbReference type="ChEBI" id="CHEBI:7896"/>
    </ligand>
</feature>
<feature type="binding site" evidence="3">
    <location>
        <begin position="127"/>
        <end position="129"/>
    </location>
    <ligand>
        <name>(9Z)-octadecenoate</name>
        <dbReference type="ChEBI" id="CHEBI:30823"/>
    </ligand>
</feature>
<feature type="binding site" evidence="2">
    <location>
        <begin position="127"/>
        <end position="129"/>
    </location>
    <ligand>
        <name>hexadecanoate</name>
        <dbReference type="ChEBI" id="CHEBI:7896"/>
    </ligand>
</feature>
<feature type="modified residue" description="N-acetylserine" evidence="3">
    <location>
        <position position="2"/>
    </location>
</feature>
<sequence>MSNKFLGTWKLVSSEHFDDYMKALGVGLANRKLGNLAKPTVIISKKGDYITIRTESAFKNTEISFKLGQEFDETTADNRKAKSIVTLERGSLKQVQKWDGKETAIRRTLLDGRMVVECIMKGVVCTRIYEKV</sequence>
<protein>
    <recommendedName>
        <fullName>Myelin P2 protein</fullName>
    </recommendedName>
</protein>
<gene>
    <name type="primary">Pmp2</name>
</gene>
<evidence type="ECO:0000250" key="1"/>
<evidence type="ECO:0000250" key="2">
    <source>
        <dbReference type="UniProtKB" id="P02689"/>
    </source>
</evidence>
<evidence type="ECO:0000250" key="3">
    <source>
        <dbReference type="UniProtKB" id="P02690"/>
    </source>
</evidence>
<evidence type="ECO:0000305" key="4"/>